<accession>Q8NHP1</accession>
<accession>Q5U614</accession>
<name>ARK74_HUMAN</name>
<proteinExistence type="evidence at protein level"/>
<protein>
    <recommendedName>
        <fullName>Aflatoxin B1 aldehyde reductase member 4</fullName>
        <ecNumber>1.-.-.-</ecNumber>
    </recommendedName>
    <alternativeName>
        <fullName>AFB1 aldehyde reductase 3</fullName>
        <shortName>AFB1-AR 3</shortName>
    </alternativeName>
    <alternativeName>
        <fullName>Aldoketoreductase 7-like</fullName>
    </alternativeName>
</protein>
<comment type="function">
    <text evidence="1">Can reduce the dialdehyde protein-binding form of aflatoxin B1 (AFB1) to the non-binding AFB1 dialcohol. May be involved in protection of liver against the toxic and carcinogenic effects of AFB1, a potent hepatocarcinogen (By similarity).</text>
</comment>
<comment type="alternative products">
    <event type="alternative splicing"/>
    <isoform>
        <id>Q8NHP1-1</id>
        <name>1</name>
        <sequence type="displayed"/>
    </isoform>
    <isoform>
        <id>Q8NHP1-3</id>
        <name>2</name>
        <sequence type="described" ref="VSP_059796"/>
    </isoform>
</comment>
<comment type="tissue specificity">
    <text evidence="3">Mainly expressed in uterus.</text>
</comment>
<comment type="polymorphism">
    <text evidence="7">The sequence shown in this entry differs from the translation of the reference genome assembly (GRCh38/hg38) due to a nonsense variant creating stop codon at position 106 in the reference genome. This sequence carries a selenocysteine-insertion element (SECIS)-like structure that during translation may recode an in-frame TGA-stop codon to a selenocysteine. However, there is no evidence that such a protein is produced in vivo. The sequence shown in this entry is that of variant p.Ter106Arg. This variant has a frequency of about 3% in the human population according to the Genome Aggregation Database (gnomAD v3.1.2).</text>
</comment>
<comment type="similarity">
    <text evidence="6">Belongs to the aldo/keto reductase family. Aldo/keto reductase 2 subfamily.</text>
</comment>
<comment type="caution">
    <text evidence="3 6">It has been speculated that AKR7L encodes a selenoprotein, which includes a selenocysteine (Sec) residue in lieu of a UGA translational termination codon at position 106 (PubMed:12879023). However, there is no evidence that such a protein is produced in vivo.</text>
</comment>
<comment type="caution">
    <text evidence="6">The sequence shown in this entry differs from the translation of the reference genome assembly (GRCh38/hg38) due to a nonsense variant creating stop codon at position 106 in the reference genome.</text>
</comment>
<comment type="sequence caution" evidence="6">
    <conflict type="erroneous translation">
        <sequence resource="EMBL-CDS" id="AAH35351"/>
    </conflict>
    <text>Erroneous CDS prediction.</text>
</comment>
<reference key="1">
    <citation type="journal article" date="2006" name="Nature">
        <title>The DNA sequence and biological annotation of human chromosome 1.</title>
        <authorList>
            <person name="Gregory S.G."/>
            <person name="Barlow K.F."/>
            <person name="McLay K.E."/>
            <person name="Kaul R."/>
            <person name="Swarbreck D."/>
            <person name="Dunham A."/>
            <person name="Scott C.E."/>
            <person name="Howe K.L."/>
            <person name="Woodfine K."/>
            <person name="Spencer C.C.A."/>
            <person name="Jones M.C."/>
            <person name="Gillson C."/>
            <person name="Searle S."/>
            <person name="Zhou Y."/>
            <person name="Kokocinski F."/>
            <person name="McDonald L."/>
            <person name="Evans R."/>
            <person name="Phillips K."/>
            <person name="Atkinson A."/>
            <person name="Cooper R."/>
            <person name="Jones C."/>
            <person name="Hall R.E."/>
            <person name="Andrews T.D."/>
            <person name="Lloyd C."/>
            <person name="Ainscough R."/>
            <person name="Almeida J.P."/>
            <person name="Ambrose K.D."/>
            <person name="Anderson F."/>
            <person name="Andrew R.W."/>
            <person name="Ashwell R.I.S."/>
            <person name="Aubin K."/>
            <person name="Babbage A.K."/>
            <person name="Bagguley C.L."/>
            <person name="Bailey J."/>
            <person name="Beasley H."/>
            <person name="Bethel G."/>
            <person name="Bird C.P."/>
            <person name="Bray-Allen S."/>
            <person name="Brown J.Y."/>
            <person name="Brown A.J."/>
            <person name="Buckley D."/>
            <person name="Burton J."/>
            <person name="Bye J."/>
            <person name="Carder C."/>
            <person name="Chapman J.C."/>
            <person name="Clark S.Y."/>
            <person name="Clarke G."/>
            <person name="Clee C."/>
            <person name="Cobley V."/>
            <person name="Collier R.E."/>
            <person name="Corby N."/>
            <person name="Coville G.J."/>
            <person name="Davies J."/>
            <person name="Deadman R."/>
            <person name="Dunn M."/>
            <person name="Earthrowl M."/>
            <person name="Ellington A.G."/>
            <person name="Errington H."/>
            <person name="Frankish A."/>
            <person name="Frankland J."/>
            <person name="French L."/>
            <person name="Garner P."/>
            <person name="Garnett J."/>
            <person name="Gay L."/>
            <person name="Ghori M.R.J."/>
            <person name="Gibson R."/>
            <person name="Gilby L.M."/>
            <person name="Gillett W."/>
            <person name="Glithero R.J."/>
            <person name="Grafham D.V."/>
            <person name="Griffiths C."/>
            <person name="Griffiths-Jones S."/>
            <person name="Grocock R."/>
            <person name="Hammond S."/>
            <person name="Harrison E.S.I."/>
            <person name="Hart E."/>
            <person name="Haugen E."/>
            <person name="Heath P.D."/>
            <person name="Holmes S."/>
            <person name="Holt K."/>
            <person name="Howden P.J."/>
            <person name="Hunt A.R."/>
            <person name="Hunt S.E."/>
            <person name="Hunter G."/>
            <person name="Isherwood J."/>
            <person name="James R."/>
            <person name="Johnson C."/>
            <person name="Johnson D."/>
            <person name="Joy A."/>
            <person name="Kay M."/>
            <person name="Kershaw J.K."/>
            <person name="Kibukawa M."/>
            <person name="Kimberley A.M."/>
            <person name="King A."/>
            <person name="Knights A.J."/>
            <person name="Lad H."/>
            <person name="Laird G."/>
            <person name="Lawlor S."/>
            <person name="Leongamornlert D.A."/>
            <person name="Lloyd D.M."/>
            <person name="Loveland J."/>
            <person name="Lovell J."/>
            <person name="Lush M.J."/>
            <person name="Lyne R."/>
            <person name="Martin S."/>
            <person name="Mashreghi-Mohammadi M."/>
            <person name="Matthews L."/>
            <person name="Matthews N.S.W."/>
            <person name="McLaren S."/>
            <person name="Milne S."/>
            <person name="Mistry S."/>
            <person name="Moore M.J.F."/>
            <person name="Nickerson T."/>
            <person name="O'Dell C.N."/>
            <person name="Oliver K."/>
            <person name="Palmeiri A."/>
            <person name="Palmer S.A."/>
            <person name="Parker A."/>
            <person name="Patel D."/>
            <person name="Pearce A.V."/>
            <person name="Peck A.I."/>
            <person name="Pelan S."/>
            <person name="Phelps K."/>
            <person name="Phillimore B.J."/>
            <person name="Plumb R."/>
            <person name="Rajan J."/>
            <person name="Raymond C."/>
            <person name="Rouse G."/>
            <person name="Saenphimmachak C."/>
            <person name="Sehra H.K."/>
            <person name="Sheridan E."/>
            <person name="Shownkeen R."/>
            <person name="Sims S."/>
            <person name="Skuce C.D."/>
            <person name="Smith M."/>
            <person name="Steward C."/>
            <person name="Subramanian S."/>
            <person name="Sycamore N."/>
            <person name="Tracey A."/>
            <person name="Tromans A."/>
            <person name="Van Helmond Z."/>
            <person name="Wall M."/>
            <person name="Wallis J.M."/>
            <person name="White S."/>
            <person name="Whitehead S.L."/>
            <person name="Wilkinson J.E."/>
            <person name="Willey D.L."/>
            <person name="Williams H."/>
            <person name="Wilming L."/>
            <person name="Wray P.W."/>
            <person name="Wu Z."/>
            <person name="Coulson A."/>
            <person name="Vaudin M."/>
            <person name="Sulston J.E."/>
            <person name="Durbin R.M."/>
            <person name="Hubbard T."/>
            <person name="Wooster R."/>
            <person name="Dunham I."/>
            <person name="Carter N.P."/>
            <person name="McVean G."/>
            <person name="Ross M.T."/>
            <person name="Harrow J."/>
            <person name="Olson M.V."/>
            <person name="Beck S."/>
            <person name="Rogers J."/>
            <person name="Bentley D.R."/>
        </authorList>
    </citation>
    <scope>NUCLEOTIDE SEQUENCE [LARGE SCALE GENOMIC DNA]</scope>
    <scope>VARIANT 106-ARG--ILE-331 DEL</scope>
</reference>
<reference key="2">
    <citation type="journal article" date="2004" name="Genome Res.">
        <title>The status, quality, and expansion of the NIH full-length cDNA project: the Mammalian Gene Collection (MGC).</title>
        <authorList>
            <consortium name="The MGC Project Team"/>
        </authorList>
    </citation>
    <scope>NUCLEOTIDE SEQUENCE [LARGE SCALE MRNA] OF 45-331 (ISOFORM 2)</scope>
    <scope>VARIANT 106-ARG--ILE-331 DEL</scope>
    <source>
        <tissue>Colon</tissue>
    </source>
</reference>
<reference key="3">
    <citation type="journal article" date="2003" name="Oncogene">
        <title>Aflatoxin B1 aldehyde reductase (AFAR) genes cluster at 1p35-1p36.1 in a region frequently altered in human tumour cells.</title>
        <authorList>
            <person name="Praml C."/>
            <person name="Savelyeva L."/>
            <person name="Schwab M."/>
        </authorList>
    </citation>
    <scope>NUCLEOTIDE SEQUENCE [MRNA] OF 73-331</scope>
    <scope>VARIANTS 106-ARG--ILE-331 DEL AND THR-255</scope>
    <scope>POLYMORPHISM</scope>
    <scope>TISSUE SPECIFICITY</scope>
    <source>
        <tissue>Uterus</tissue>
    </source>
</reference>
<keyword id="KW-0025">Alternative splicing</keyword>
<keyword id="KW-0521">NADP</keyword>
<keyword id="KW-0560">Oxidoreductase</keyword>
<keyword id="KW-0597">Phosphoprotein</keyword>
<keyword id="KW-1267">Proteomics identification</keyword>
<keyword id="KW-1185">Reference proteome</keyword>
<dbReference type="EC" id="1.-.-.-"/>
<dbReference type="EMBL" id="AL035413">
    <property type="status" value="NOT_ANNOTATED_CDS"/>
    <property type="molecule type" value="Genomic_DNA"/>
</dbReference>
<dbReference type="EMBL" id="BC035351">
    <property type="protein sequence ID" value="AAH35351.1"/>
    <property type="status" value="ALT_SEQ"/>
    <property type="molecule type" value="mRNA"/>
</dbReference>
<dbReference type="EMBL" id="AJ278012">
    <property type="protein sequence ID" value="CAC79668.1"/>
    <property type="molecule type" value="mRNA"/>
</dbReference>
<dbReference type="RefSeq" id="NP_001335350.1">
    <molecule id="Q8NHP1-1"/>
    <property type="nucleotide sequence ID" value="NM_001348421.1"/>
</dbReference>
<dbReference type="SMR" id="Q8NHP1"/>
<dbReference type="FunCoup" id="Q8NHP1">
    <property type="interactions" value="106"/>
</dbReference>
<dbReference type="IntAct" id="Q8NHP1">
    <property type="interactions" value="71"/>
</dbReference>
<dbReference type="GlyGen" id="Q8NHP1">
    <property type="glycosylation" value="2 sites, 1 O-linked glycan (1 site)"/>
</dbReference>
<dbReference type="iPTMnet" id="Q8NHP1"/>
<dbReference type="PhosphoSitePlus" id="Q8NHP1"/>
<dbReference type="BioMuta" id="AKR7L"/>
<dbReference type="DMDM" id="294862545"/>
<dbReference type="jPOST" id="Q8NHP1"/>
<dbReference type="MassIVE" id="Q8NHP1"/>
<dbReference type="PeptideAtlas" id="Q8NHP1"/>
<dbReference type="ProteomicsDB" id="73727">
    <molecule id="Q8NHP1-1"/>
</dbReference>
<dbReference type="DNASU" id="246181"/>
<dbReference type="GeneID" id="246181"/>
<dbReference type="KEGG" id="hsa:246181"/>
<dbReference type="UCSC" id="uc057cwj.1">
    <molecule id="Q8NHP1-1"/>
    <property type="organism name" value="human"/>
</dbReference>
<dbReference type="AGR" id="HGNC:24056"/>
<dbReference type="CTD" id="246181"/>
<dbReference type="DisGeNET" id="246181"/>
<dbReference type="GeneCards" id="AKR7L"/>
<dbReference type="HGNC" id="HGNC:24056">
    <property type="gene designation" value="AKR7L"/>
</dbReference>
<dbReference type="MIM" id="608478">
    <property type="type" value="gene"/>
</dbReference>
<dbReference type="neXtProt" id="NX_Q8NHP1"/>
<dbReference type="PharmGKB" id="PA164715300"/>
<dbReference type="InParanoid" id="Q8NHP1"/>
<dbReference type="OrthoDB" id="48988at2759"/>
<dbReference type="PAN-GO" id="Q8NHP1">
    <property type="GO annotations" value="2 GO annotations based on evolutionary models"/>
</dbReference>
<dbReference type="PhylomeDB" id="Q8NHP1"/>
<dbReference type="PathwayCommons" id="Q8NHP1"/>
<dbReference type="Reactome" id="R-HSA-5423646">
    <property type="pathway name" value="Aflatoxin activation and detoxification"/>
</dbReference>
<dbReference type="SignaLink" id="Q8NHP1"/>
<dbReference type="BioGRID-ORCS" id="246181">
    <property type="hits" value="0 hits in 38 CRISPR screens"/>
</dbReference>
<dbReference type="ChiTaRS" id="AKR7L">
    <property type="organism name" value="human"/>
</dbReference>
<dbReference type="GenomeRNAi" id="246181"/>
<dbReference type="Pharos" id="Q8NHP1">
    <property type="development level" value="Tdark"/>
</dbReference>
<dbReference type="PRO" id="PR:Q8NHP1"/>
<dbReference type="Proteomes" id="UP000005640">
    <property type="component" value="Unplaced"/>
</dbReference>
<dbReference type="RNAct" id="Q8NHP1">
    <property type="molecule type" value="protein"/>
</dbReference>
<dbReference type="GO" id="GO:0005737">
    <property type="term" value="C:cytoplasm"/>
    <property type="evidence" value="ECO:0000318"/>
    <property type="project" value="GO_Central"/>
</dbReference>
<dbReference type="GO" id="GO:0005829">
    <property type="term" value="C:cytosol"/>
    <property type="evidence" value="ECO:0000304"/>
    <property type="project" value="Reactome"/>
</dbReference>
<dbReference type="GO" id="GO:0070062">
    <property type="term" value="C:extracellular exosome"/>
    <property type="evidence" value="ECO:0007005"/>
    <property type="project" value="UniProtKB"/>
</dbReference>
<dbReference type="GO" id="GO:0004033">
    <property type="term" value="F:aldo-keto reductase (NADPH) activity"/>
    <property type="evidence" value="ECO:0000318"/>
    <property type="project" value="GO_Central"/>
</dbReference>
<dbReference type="CDD" id="cd19075">
    <property type="entry name" value="AKR_AKR7A1-5"/>
    <property type="match status" value="1"/>
</dbReference>
<dbReference type="FunFam" id="3.20.20.100:FF:000017">
    <property type="entry name" value="Aflatoxin B1 aldehyde reductase member 2"/>
    <property type="match status" value="1"/>
</dbReference>
<dbReference type="Gene3D" id="3.20.20.100">
    <property type="entry name" value="NADP-dependent oxidoreductase domain"/>
    <property type="match status" value="1"/>
</dbReference>
<dbReference type="InterPro" id="IPR050523">
    <property type="entry name" value="AKR_Detox_Biosynth"/>
</dbReference>
<dbReference type="InterPro" id="IPR023210">
    <property type="entry name" value="NADP_OxRdtase_dom"/>
</dbReference>
<dbReference type="InterPro" id="IPR036812">
    <property type="entry name" value="NADP_OxRdtase_dom_sf"/>
</dbReference>
<dbReference type="PANTHER" id="PTHR43364:SF4">
    <property type="entry name" value="NAD(P)-LINKED OXIDOREDUCTASE SUPERFAMILY PROTEIN"/>
    <property type="match status" value="1"/>
</dbReference>
<dbReference type="PANTHER" id="PTHR43364">
    <property type="entry name" value="NADH-SPECIFIC METHYLGLYOXAL REDUCTASE-RELATED"/>
    <property type="match status" value="1"/>
</dbReference>
<dbReference type="Pfam" id="PF00248">
    <property type="entry name" value="Aldo_ket_red"/>
    <property type="match status" value="1"/>
</dbReference>
<dbReference type="SUPFAM" id="SSF51430">
    <property type="entry name" value="NAD(P)-linked oxidoreductase"/>
    <property type="match status" value="1"/>
</dbReference>
<evidence type="ECO:0000250" key="1"/>
<evidence type="ECO:0000250" key="2">
    <source>
        <dbReference type="UniProtKB" id="O95154"/>
    </source>
</evidence>
<evidence type="ECO:0000269" key="3">
    <source>
    </source>
</evidence>
<evidence type="ECO:0000269" key="4">
    <source>
    </source>
</evidence>
<evidence type="ECO:0000303" key="5">
    <source>
    </source>
</evidence>
<evidence type="ECO:0000305" key="6"/>
<evidence type="ECO:0000305" key="7">
    <source>
    </source>
</evidence>
<gene>
    <name type="primary">AKR7L</name>
    <name evidence="5" type="synonym">AFAR3</name>
    <name type="synonym">AKR7A4</name>
</gene>
<feature type="chain" id="PRO_0000070379" description="Aflatoxin B1 aldehyde reductase member 4">
    <location>
        <begin position="1"/>
        <end position="331"/>
    </location>
</feature>
<feature type="active site" description="Proton donor" evidence="1">
    <location>
        <position position="49"/>
    </location>
</feature>
<feature type="binding site" evidence="1">
    <location>
        <position position="44"/>
    </location>
    <ligand>
        <name>NADP(+)</name>
        <dbReference type="ChEBI" id="CHEBI:58349"/>
    </ligand>
</feature>
<feature type="binding site" evidence="1">
    <location>
        <position position="113"/>
    </location>
    <ligand>
        <name>substrate</name>
    </ligand>
</feature>
<feature type="binding site" evidence="1">
    <location>
        <begin position="143"/>
        <end position="144"/>
    </location>
    <ligand>
        <name>NADP(+)</name>
        <dbReference type="ChEBI" id="CHEBI:58349"/>
    </ligand>
</feature>
<feature type="binding site" evidence="1">
    <location>
        <position position="169"/>
    </location>
    <ligand>
        <name>NADP(+)</name>
        <dbReference type="ChEBI" id="CHEBI:58349"/>
    </ligand>
</feature>
<feature type="binding site" evidence="1">
    <location>
        <begin position="198"/>
        <end position="208"/>
    </location>
    <ligand>
        <name>NADP(+)</name>
        <dbReference type="ChEBI" id="CHEBI:58349"/>
    </ligand>
</feature>
<feature type="binding site" evidence="1">
    <location>
        <position position="222"/>
    </location>
    <ligand>
        <name>NADP(+)</name>
        <dbReference type="ChEBI" id="CHEBI:58349"/>
    </ligand>
</feature>
<feature type="binding site" evidence="1">
    <location>
        <position position="232"/>
    </location>
    <ligand>
        <name>substrate</name>
    </ligand>
</feature>
<feature type="binding site" evidence="1">
    <location>
        <begin position="290"/>
        <end position="298"/>
    </location>
    <ligand>
        <name>NADP(+)</name>
        <dbReference type="ChEBI" id="CHEBI:58349"/>
    </ligand>
</feature>
<feature type="site" description="Lowers pKa of active site Tyr" evidence="1">
    <location>
        <position position="77"/>
    </location>
</feature>
<feature type="modified residue" description="Phosphoserine" evidence="2">
    <location>
        <position position="85"/>
    </location>
</feature>
<feature type="splice variant" id="VSP_059796" description="In isoform 2.">
    <original>GMYSATTRQVETELFPCLRHFGLRFYAYNPLAGGLLTGKYKYEDKDGKQPVGRFFGTQWAEIYRNHFWKEHHFEGIALVEKALQAAYGASAPSMTSAALRWMYHHSQLQGAHGDAVILGMSSLEQLEQNLAAAEEGPLEPAVVDAFNQAWHLFAHECPNYFI</original>
    <variation>LLEGAPLRGHCPGGEGPAGRVWRQRSQHDLGRPPVDVPPLTAAGCPRGRGHPGHVQPGAAGAELGSGRGRAPGAGCRGRL</variation>
    <location>
        <begin position="170"/>
        <end position="331"/>
    </location>
</feature>
<feature type="sequence variant" id="VAR_088063" evidence="4">
    <location>
        <begin position="106"/>
        <end position="331"/>
    </location>
</feature>
<feature type="sequence variant" id="VAR_046190" description="In dbSNP:rs2235795." evidence="3">
    <original>A</original>
    <variation>T</variation>
    <location>
        <position position="255"/>
    </location>
</feature>
<feature type="sequence variant" id="VAR_046191" description="In dbSNP:rs2982534.">
    <original>F</original>
    <variation>V</variation>
    <location>
        <position position="322"/>
    </location>
</feature>
<feature type="sequence conflict" description="In Ref. 3; CAC79668." evidence="6" ref="3">
    <original>C</original>
    <variation>Y</variation>
    <location>
        <position position="186"/>
    </location>
</feature>
<sequence>MSRQLSRARPATVLGAMEMGRRMDAPTSAAVTRAFLERGHTEIDTAFLYSDGQSETILGGLGLRMGSSDCRVKIATKANPWIGNSLKPDSVRSQLETSLKRLQCPRVDLFYLHAPDHSAPVEETLRACHQLHQEGKFVELGLSNYAAWEVAEICTLCKSNGWILPTVYQGMYSATTRQVETELFPCLRHFGLRFYAYNPLAGGLLTGKYKYEDKDGKQPVGRFFGTQWAEIYRNHFWKEHHFEGIALVEKALQAAYGASAPSMTSAALRWMYHHSQLQGAHGDAVILGMSSLEQLEQNLAAAEEGPLEPAVVDAFNQAWHLFAHECPNYFI</sequence>
<organism>
    <name type="scientific">Homo sapiens</name>
    <name type="common">Human</name>
    <dbReference type="NCBI Taxonomy" id="9606"/>
    <lineage>
        <taxon>Eukaryota</taxon>
        <taxon>Metazoa</taxon>
        <taxon>Chordata</taxon>
        <taxon>Craniata</taxon>
        <taxon>Vertebrata</taxon>
        <taxon>Euteleostomi</taxon>
        <taxon>Mammalia</taxon>
        <taxon>Eutheria</taxon>
        <taxon>Euarchontoglires</taxon>
        <taxon>Primates</taxon>
        <taxon>Haplorrhini</taxon>
        <taxon>Catarrhini</taxon>
        <taxon>Hominidae</taxon>
        <taxon>Homo</taxon>
    </lineage>
</organism>